<accession>P0DX45</accession>
<accession>A0A9R0BIR4</accession>
<evidence type="ECO:0000255" key="1">
    <source>
        <dbReference type="PROSITE-ProRule" id="PRU00303"/>
    </source>
</evidence>
<evidence type="ECO:0000269" key="2">
    <source>
    </source>
</evidence>
<evidence type="ECO:0000305" key="3"/>
<evidence type="ECO:0000305" key="4">
    <source>
    </source>
</evidence>
<evidence type="ECO:0000312" key="5">
    <source>
        <dbReference type="EMBL" id="CBE02867.1"/>
    </source>
</evidence>
<gene>
    <name evidence="5" type="ordered locus">CDR20291_0805</name>
</gene>
<dbReference type="EMBL" id="FN545816">
    <property type="protein sequence ID" value="CBE02867.1"/>
    <property type="molecule type" value="Genomic_DNA"/>
</dbReference>
<dbReference type="RefSeq" id="WP_009892818.1">
    <property type="nucleotide sequence ID" value="NZ_CP115183.1"/>
</dbReference>
<dbReference type="SMR" id="P0DX45"/>
<dbReference type="KEGG" id="cdl:CDR20291_0805"/>
<dbReference type="Proteomes" id="UP000002070">
    <property type="component" value="Chromosome"/>
</dbReference>
<dbReference type="GO" id="GO:0005886">
    <property type="term" value="C:plasma membrane"/>
    <property type="evidence" value="ECO:0007669"/>
    <property type="project" value="UniProtKB-SubCell"/>
</dbReference>
<dbReference type="GO" id="GO:0006865">
    <property type="term" value="P:amino acid transport"/>
    <property type="evidence" value="ECO:0007669"/>
    <property type="project" value="UniProtKB-KW"/>
</dbReference>
<dbReference type="CDD" id="cd06325">
    <property type="entry name" value="PBP1_ABC_unchar_transporter"/>
    <property type="match status" value="1"/>
</dbReference>
<dbReference type="Gene3D" id="3.40.50.2300">
    <property type="match status" value="2"/>
</dbReference>
<dbReference type="InterPro" id="IPR007487">
    <property type="entry name" value="ABC_transpt-TYRBP-like"/>
</dbReference>
<dbReference type="InterPro" id="IPR028082">
    <property type="entry name" value="Peripla_BP_I"/>
</dbReference>
<dbReference type="PANTHER" id="PTHR35271:SF1">
    <property type="entry name" value="ABC TRANSPORTER, SUBSTRATE-BINDING LIPOPROTEIN"/>
    <property type="match status" value="1"/>
</dbReference>
<dbReference type="PANTHER" id="PTHR35271">
    <property type="entry name" value="ABC TRANSPORTER, SUBSTRATE-BINDING LIPOPROTEIN-RELATED"/>
    <property type="match status" value="1"/>
</dbReference>
<dbReference type="Pfam" id="PF04392">
    <property type="entry name" value="ABC_sub_bind"/>
    <property type="match status" value="1"/>
</dbReference>
<dbReference type="SUPFAM" id="SSF53822">
    <property type="entry name" value="Periplasmic binding protein-like I"/>
    <property type="match status" value="1"/>
</dbReference>
<proteinExistence type="inferred from homology"/>
<protein>
    <recommendedName>
        <fullName evidence="3">Tyrosine-binding protein</fullName>
    </recommendedName>
</protein>
<sequence>MIKSKKILSLIIAGVLGVSMLTGCSQNDGSNASNENKKTDSKKQKNIGISQLVEHPSLDKAKKGFIKALEDKGYKDGDNIKIDFQNAQNDMPTTQSIASKFVSDKKDLIYAISTPSAQAAYNATKDIPIIMTAVTDPVEAGLVKSLEKPGGNVSGTSDYLSIDKTLELVKTLTPKAKKIGVIYNTSEVNSKIQVDSLHDYAKKNNYEVVEKGISTSSEVNQAISSLVGKIDVLYVPTDNLIVSSMPIVSKVANENKIPIIASEEGSVSSGALACCGIDYEKLGYKAGELAIEVLEGKSVGDIPVTTLDETEIIINEDTLKALDMQKLSADNIKYIKSDENAKSAK</sequence>
<keyword id="KW-0029">Amino-acid transport</keyword>
<keyword id="KW-1003">Cell membrane</keyword>
<keyword id="KW-0449">Lipoprotein</keyword>
<keyword id="KW-0472">Membrane</keyword>
<keyword id="KW-0564">Palmitate</keyword>
<keyword id="KW-0732">Signal</keyword>
<keyword id="KW-0813">Transport</keyword>
<comment type="function">
    <text evidence="2">Probably part of an ABC transporter complex involved in tyrosine uptake (PubMed:29867812). May also import phenylalanine (PubMed:29867812).</text>
</comment>
<comment type="subunit">
    <text evidence="4">The complex is probably composed of two ATP-binding proteins (CDR20291_0806), two transmembrane proteins (CDR20291_0807) and a solute-binding protein (CDR20291_0805).</text>
</comment>
<comment type="subcellular location">
    <subcellularLocation>
        <location evidence="1">Cell membrane</location>
        <topology evidence="1">Lipid-anchor</topology>
    </subcellularLocation>
</comment>
<comment type="disruption phenotype">
    <text evidence="2">C.difficile isolates lacking CDR20291_0805 and CDR20291_0806 show reduced uptake of tyrosine (PubMed:29867812). Production of the tyrosine catabolic end product p-cresol is decreased by sixfold, and the intermediate fermentation product (4-hydroxyphenyl)acetate is not detectable at all (PubMed:29867812).</text>
</comment>
<feature type="signal peptide" evidence="1">
    <location>
        <begin position="1"/>
        <end position="23"/>
    </location>
</feature>
<feature type="chain" id="PRO_0000458887" description="Tyrosine-binding protein" evidence="1">
    <location>
        <begin position="24"/>
        <end position="345"/>
    </location>
</feature>
<feature type="lipid moiety-binding region" description="N-palmitoyl cysteine" evidence="1">
    <location>
        <position position="24"/>
    </location>
</feature>
<feature type="lipid moiety-binding region" description="S-diacylglycerol cysteine" evidence="1">
    <location>
        <position position="24"/>
    </location>
</feature>
<organism>
    <name type="scientific">Clostridioides difficile (strain R20291)</name>
    <name type="common">Peptoclostridium difficile</name>
    <dbReference type="NCBI Taxonomy" id="645463"/>
    <lineage>
        <taxon>Bacteria</taxon>
        <taxon>Bacillati</taxon>
        <taxon>Bacillota</taxon>
        <taxon>Clostridia</taxon>
        <taxon>Peptostreptococcales</taxon>
        <taxon>Peptostreptococcaceae</taxon>
        <taxon>Clostridioides</taxon>
    </lineage>
</organism>
<name>TYRBP_CLODR</name>
<reference key="1">
    <citation type="journal article" date="2009" name="Genome Biol.">
        <title>Comparative genome and phenotypic analysis of Clostridium difficile 027 strains provides insight into the evolution of a hypervirulent bacterium.</title>
        <authorList>
            <person name="Stabler R.A."/>
            <person name="He M."/>
            <person name="Dawson L."/>
            <person name="Martin M."/>
            <person name="Valiente E."/>
            <person name="Corton C."/>
            <person name="Lawley T.D."/>
            <person name="Sebaihia M."/>
            <person name="Quail M.A."/>
            <person name="Rose G."/>
            <person name="Gerding D.N."/>
            <person name="Gibert M."/>
            <person name="Popoff M.R."/>
            <person name="Parkhill J."/>
            <person name="Dougan G."/>
            <person name="Wren B.W."/>
        </authorList>
    </citation>
    <scope>NUCLEOTIDE SEQUENCE [LARGE SCALE GENOMIC DNA]</scope>
    <source>
        <strain>R20291</strain>
    </source>
</reference>
<reference key="2">
    <citation type="journal article" date="2018" name="Front. Microbiol.">
        <title>Convergent loss of ABC transporter genes from Clostridioides difficile genomes is associated with impaired tyrosine uptake and p-cresol production.</title>
        <authorList>
            <person name="Steglich M."/>
            <person name="Hofmann J.D."/>
            <person name="Helmecke J."/>
            <person name="Sikorski J."/>
            <person name="Sproeer C."/>
            <person name="Riedel T."/>
            <person name="Bunk B."/>
            <person name="Overmann J."/>
            <person name="Neumann-Schaal M."/>
            <person name="Nuebel U."/>
        </authorList>
    </citation>
    <scope>FUNCTION</scope>
    <scope>DISRUPTION PHENOTYPE</scope>
</reference>